<dbReference type="EC" id="2.1.1.173" evidence="1"/>
<dbReference type="EC" id="2.1.1.264" evidence="1"/>
<dbReference type="EMBL" id="CP000672">
    <property type="protein sequence ID" value="ABQ99627.1"/>
    <property type="molecule type" value="Genomic_DNA"/>
</dbReference>
<dbReference type="SMR" id="A5UFS2"/>
<dbReference type="KEGG" id="hiq:CGSHiGG_03160"/>
<dbReference type="HOGENOM" id="CLU_014042_2_0_6"/>
<dbReference type="Proteomes" id="UP000001990">
    <property type="component" value="Chromosome"/>
</dbReference>
<dbReference type="GO" id="GO:0005737">
    <property type="term" value="C:cytoplasm"/>
    <property type="evidence" value="ECO:0007669"/>
    <property type="project" value="UniProtKB-SubCell"/>
</dbReference>
<dbReference type="GO" id="GO:0052915">
    <property type="term" value="F:23S rRNA (guanine(2445)-N(2))-methyltransferase activity"/>
    <property type="evidence" value="ECO:0007669"/>
    <property type="project" value="UniProtKB-UniRule"/>
</dbReference>
<dbReference type="GO" id="GO:0003723">
    <property type="term" value="F:RNA binding"/>
    <property type="evidence" value="ECO:0007669"/>
    <property type="project" value="UniProtKB-KW"/>
</dbReference>
<dbReference type="GO" id="GO:0070043">
    <property type="term" value="F:rRNA (guanine-N7-)-methyltransferase activity"/>
    <property type="evidence" value="ECO:0007669"/>
    <property type="project" value="UniProtKB-UniRule"/>
</dbReference>
<dbReference type="CDD" id="cd02440">
    <property type="entry name" value="AdoMet_MTases"/>
    <property type="match status" value="2"/>
</dbReference>
<dbReference type="CDD" id="cd11715">
    <property type="entry name" value="THUMP_AdoMetMT"/>
    <property type="match status" value="1"/>
</dbReference>
<dbReference type="FunFam" id="3.30.750.80:FF:000001">
    <property type="entry name" value="Ribosomal RNA large subunit methyltransferase K/L"/>
    <property type="match status" value="1"/>
</dbReference>
<dbReference type="FunFam" id="3.40.50.150:FF:000039">
    <property type="entry name" value="Ribosomal RNA large subunit methyltransferase K/L"/>
    <property type="match status" value="1"/>
</dbReference>
<dbReference type="Gene3D" id="3.30.2130.30">
    <property type="match status" value="1"/>
</dbReference>
<dbReference type="Gene3D" id="3.30.750.80">
    <property type="entry name" value="RNA methyltransferase domain (HRMD) like"/>
    <property type="match status" value="1"/>
</dbReference>
<dbReference type="Gene3D" id="3.40.50.150">
    <property type="entry name" value="Vaccinia Virus protein VP39"/>
    <property type="match status" value="2"/>
</dbReference>
<dbReference type="HAMAP" id="MF_01858">
    <property type="entry name" value="23SrRNA_methyltr_KL"/>
    <property type="match status" value="1"/>
</dbReference>
<dbReference type="InterPro" id="IPR017244">
    <property type="entry name" value="23SrRNA_methyltr_KL"/>
</dbReference>
<dbReference type="InterPro" id="IPR002052">
    <property type="entry name" value="DNA_methylase_N6_adenine_CS"/>
</dbReference>
<dbReference type="InterPro" id="IPR000241">
    <property type="entry name" value="RlmKL-like_Mtase"/>
</dbReference>
<dbReference type="InterPro" id="IPR053943">
    <property type="entry name" value="RlmKL-like_Mtase_CS"/>
</dbReference>
<dbReference type="InterPro" id="IPR054170">
    <property type="entry name" value="RlmL_1st"/>
</dbReference>
<dbReference type="InterPro" id="IPR019614">
    <property type="entry name" value="SAM-dep_methyl-trfase"/>
</dbReference>
<dbReference type="InterPro" id="IPR029063">
    <property type="entry name" value="SAM-dependent_MTases_sf"/>
</dbReference>
<dbReference type="InterPro" id="IPR004114">
    <property type="entry name" value="THUMP_dom"/>
</dbReference>
<dbReference type="NCBIfam" id="NF008748">
    <property type="entry name" value="PRK11783.1"/>
    <property type="match status" value="1"/>
</dbReference>
<dbReference type="PANTHER" id="PTHR47313">
    <property type="entry name" value="RIBOSOMAL RNA LARGE SUBUNIT METHYLTRANSFERASE K/L"/>
    <property type="match status" value="1"/>
</dbReference>
<dbReference type="PANTHER" id="PTHR47313:SF1">
    <property type="entry name" value="RIBOSOMAL RNA LARGE SUBUNIT METHYLTRANSFERASE K_L"/>
    <property type="match status" value="1"/>
</dbReference>
<dbReference type="Pfam" id="PF10672">
    <property type="entry name" value="Methyltrans_SAM"/>
    <property type="match status" value="1"/>
</dbReference>
<dbReference type="Pfam" id="PF22020">
    <property type="entry name" value="RlmL_1st"/>
    <property type="match status" value="1"/>
</dbReference>
<dbReference type="Pfam" id="PF02926">
    <property type="entry name" value="THUMP"/>
    <property type="match status" value="1"/>
</dbReference>
<dbReference type="Pfam" id="PF01170">
    <property type="entry name" value="UPF0020"/>
    <property type="match status" value="1"/>
</dbReference>
<dbReference type="PIRSF" id="PIRSF037618">
    <property type="entry name" value="RNA_Mtase_bacteria_prd"/>
    <property type="match status" value="1"/>
</dbReference>
<dbReference type="SMART" id="SM00981">
    <property type="entry name" value="THUMP"/>
    <property type="match status" value="1"/>
</dbReference>
<dbReference type="SUPFAM" id="SSF53335">
    <property type="entry name" value="S-adenosyl-L-methionine-dependent methyltransferases"/>
    <property type="match status" value="2"/>
</dbReference>
<dbReference type="PROSITE" id="PS51165">
    <property type="entry name" value="THUMP"/>
    <property type="match status" value="1"/>
</dbReference>
<dbReference type="PROSITE" id="PS01261">
    <property type="entry name" value="UPF0020"/>
    <property type="match status" value="1"/>
</dbReference>
<keyword id="KW-0963">Cytoplasm</keyword>
<keyword id="KW-0489">Methyltransferase</keyword>
<keyword id="KW-0694">RNA-binding</keyword>
<keyword id="KW-0698">rRNA processing</keyword>
<keyword id="KW-0949">S-adenosyl-L-methionine</keyword>
<keyword id="KW-0808">Transferase</keyword>
<organism>
    <name type="scientific">Haemophilus influenzae (strain PittGG)</name>
    <dbReference type="NCBI Taxonomy" id="374931"/>
    <lineage>
        <taxon>Bacteria</taxon>
        <taxon>Pseudomonadati</taxon>
        <taxon>Pseudomonadota</taxon>
        <taxon>Gammaproteobacteria</taxon>
        <taxon>Pasteurellales</taxon>
        <taxon>Pasteurellaceae</taxon>
        <taxon>Haemophilus</taxon>
    </lineage>
</organism>
<accession>A5UFS2</accession>
<comment type="function">
    <text evidence="1">Specifically methylates the guanine in position 2445 (m2G2445) and the guanine in position 2069 (m7G2069) of 23S rRNA.</text>
</comment>
<comment type="catalytic activity">
    <reaction evidence="1">
        <text>guanosine(2445) in 23S rRNA + S-adenosyl-L-methionine = N(2)-methylguanosine(2445) in 23S rRNA + S-adenosyl-L-homocysteine + H(+)</text>
        <dbReference type="Rhea" id="RHEA:42740"/>
        <dbReference type="Rhea" id="RHEA-COMP:10215"/>
        <dbReference type="Rhea" id="RHEA-COMP:10216"/>
        <dbReference type="ChEBI" id="CHEBI:15378"/>
        <dbReference type="ChEBI" id="CHEBI:57856"/>
        <dbReference type="ChEBI" id="CHEBI:59789"/>
        <dbReference type="ChEBI" id="CHEBI:74269"/>
        <dbReference type="ChEBI" id="CHEBI:74481"/>
        <dbReference type="EC" id="2.1.1.173"/>
    </reaction>
</comment>
<comment type="catalytic activity">
    <reaction evidence="1">
        <text>guanosine(2069) in 23S rRNA + S-adenosyl-L-methionine = N(2)-methylguanosine(2069) in 23S rRNA + S-adenosyl-L-homocysteine + H(+)</text>
        <dbReference type="Rhea" id="RHEA:43772"/>
        <dbReference type="Rhea" id="RHEA-COMP:10688"/>
        <dbReference type="Rhea" id="RHEA-COMP:10689"/>
        <dbReference type="ChEBI" id="CHEBI:15378"/>
        <dbReference type="ChEBI" id="CHEBI:57856"/>
        <dbReference type="ChEBI" id="CHEBI:59789"/>
        <dbReference type="ChEBI" id="CHEBI:74269"/>
        <dbReference type="ChEBI" id="CHEBI:74481"/>
        <dbReference type="EC" id="2.1.1.264"/>
    </reaction>
</comment>
<comment type="subcellular location">
    <subcellularLocation>
        <location evidence="1">Cytoplasm</location>
    </subcellularLocation>
</comment>
<comment type="similarity">
    <text evidence="1">Belongs to the methyltransferase superfamily. RlmKL family.</text>
</comment>
<gene>
    <name evidence="1" type="primary">rlmL</name>
    <name type="ordered locus">CGSHiGG_03160</name>
</gene>
<sequence>MKQLFATTSRGFEELLKVELTELGAQEAKVVQGGVHYQADDETLYRTLLWSRLASRILFPLIETKIYSDLDLYAAVSGFNWLAQFDERVTFFVDFNGTNQEIRHTQFGAMRVKDGIVDYFERQGKARPDVDKIQPDVRIHAYLNRENLVISLDLSGEALHLRGYREDAGQAPLRETLAAAIVMRSGWQAGSPLVDPMCGSGTLLIEAAQIEAKIAPQLYRLHWGFDFWKAHNQSAWEKVKNEAIELAEEKQREIQPHFYGFDLDHRVLKKAQKNAQNAGVSHLIKWQQADVAALKNPRLNEVGTVICNPPYGERLGTTPALIALYSVFGQRLKKEFCGWNVSVFSSESTLLDCLRMRASRQFKAKNGPLDCVQKNYQVSERKSDAITDEKELEFNRTSEVAPDFANRLQKNIKKISKWAKQQELDAYRLYDADLPEYNLAVDRYADYIVVQEYAAPKNIDENKARQRLLDAVTATLQVTGVETNKLILKVRQKQKGTNQYEKLANKGEYFYVNEYGTQLWVNLTDYLDTGLFLDHRLTRKMIGELAKGKDFLNLFAYTGSATVHAALGGAKSTTTVDMSNTYLNWAEQNLILNDIEGKQHKLIQADCLQWLEKCDRQFDLIFVDPPTFSNSKRMEESWDVQRDHVKLMSNLKRVLSNNGTIVFSNNKRGFKMNLVALEELGLSAVEISHKTLPLDFERNKQIHNCWMIQHI</sequence>
<name>RLMKL_HAEIG</name>
<feature type="chain" id="PRO_0000366762" description="Ribosomal RNA large subunit methyltransferase K/L">
    <location>
        <begin position="1"/>
        <end position="711"/>
    </location>
</feature>
<feature type="domain" description="THUMP" evidence="1">
    <location>
        <begin position="43"/>
        <end position="154"/>
    </location>
</feature>
<evidence type="ECO:0000255" key="1">
    <source>
        <dbReference type="HAMAP-Rule" id="MF_01858"/>
    </source>
</evidence>
<protein>
    <recommendedName>
        <fullName evidence="1">Ribosomal RNA large subunit methyltransferase K/L</fullName>
    </recommendedName>
    <domain>
        <recommendedName>
            <fullName evidence="1">23S rRNA m2G2445 methyltransferase</fullName>
            <ecNumber evidence="1">2.1.1.173</ecNumber>
        </recommendedName>
        <alternativeName>
            <fullName evidence="1">rRNA (guanine-N(2)-)-methyltransferase RlmL</fullName>
        </alternativeName>
    </domain>
    <domain>
        <recommendedName>
            <fullName evidence="1">23S rRNA m7G2069 methyltransferase</fullName>
            <ecNumber evidence="1">2.1.1.264</ecNumber>
        </recommendedName>
        <alternativeName>
            <fullName evidence="1">rRNA (guanine-N(7)-)-methyltransferase RlmK</fullName>
        </alternativeName>
    </domain>
</protein>
<proteinExistence type="inferred from homology"/>
<reference key="1">
    <citation type="journal article" date="2007" name="Genome Biol.">
        <title>Characterization and modeling of the Haemophilus influenzae core and supragenomes based on the complete genomic sequences of Rd and 12 clinical nontypeable strains.</title>
        <authorList>
            <person name="Hogg J.S."/>
            <person name="Hu F.Z."/>
            <person name="Janto B."/>
            <person name="Boissy R."/>
            <person name="Hayes J."/>
            <person name="Keefe R."/>
            <person name="Post J.C."/>
            <person name="Ehrlich G.D."/>
        </authorList>
    </citation>
    <scope>NUCLEOTIDE SEQUENCE [LARGE SCALE GENOMIC DNA]</scope>
    <source>
        <strain>PittGG</strain>
    </source>
</reference>